<protein>
    <recommendedName>
        <fullName evidence="1">Aliphatic sulfonates import ATP-binding protein SsuB 1</fullName>
        <ecNumber evidence="1">7.6.2.14</ecNumber>
    </recommendedName>
</protein>
<evidence type="ECO:0000255" key="1">
    <source>
        <dbReference type="HAMAP-Rule" id="MF_01724"/>
    </source>
</evidence>
<evidence type="ECO:0000305" key="2"/>
<reference key="1">
    <citation type="journal article" date="2007" name="Genome Res.">
        <title>Genome characteristics of facultatively symbiotic Frankia sp. strains reflect host range and host plant biogeography.</title>
        <authorList>
            <person name="Normand P."/>
            <person name="Lapierre P."/>
            <person name="Tisa L.S."/>
            <person name="Gogarten J.P."/>
            <person name="Alloisio N."/>
            <person name="Bagnarol E."/>
            <person name="Bassi C.A."/>
            <person name="Berry A.M."/>
            <person name="Bickhart D.M."/>
            <person name="Choisne N."/>
            <person name="Couloux A."/>
            <person name="Cournoyer B."/>
            <person name="Cruveiller S."/>
            <person name="Daubin V."/>
            <person name="Demange N."/>
            <person name="Francino M.P."/>
            <person name="Goltsman E."/>
            <person name="Huang Y."/>
            <person name="Kopp O.R."/>
            <person name="Labarre L."/>
            <person name="Lapidus A."/>
            <person name="Lavire C."/>
            <person name="Marechal J."/>
            <person name="Martinez M."/>
            <person name="Mastronunzio J.E."/>
            <person name="Mullin B.C."/>
            <person name="Niemann J."/>
            <person name="Pujic P."/>
            <person name="Rawnsley T."/>
            <person name="Rouy Z."/>
            <person name="Schenowitz C."/>
            <person name="Sellstedt A."/>
            <person name="Tavares F."/>
            <person name="Tomkins J.P."/>
            <person name="Vallenet D."/>
            <person name="Valverde C."/>
            <person name="Wall L.G."/>
            <person name="Wang Y."/>
            <person name="Medigue C."/>
            <person name="Benson D.R."/>
        </authorList>
    </citation>
    <scope>NUCLEOTIDE SEQUENCE [LARGE SCALE GENOMIC DNA]</scope>
    <source>
        <strain>DSM 45986 / CECT 9034 / ACN14a</strain>
    </source>
</reference>
<name>SSUB1_FRAAA</name>
<comment type="function">
    <text evidence="1">Part of the ABC transporter complex SsuABC involved in aliphatic sulfonates import. Responsible for energy coupling to the transport system.</text>
</comment>
<comment type="catalytic activity">
    <reaction evidence="1">
        <text>ATP + H2O + aliphatic sulfonate-[sulfonate-binding protein]Side 1 = ADP + phosphate + aliphatic sulfonateSide 2 + [sulfonate-binding protein]Side 1.</text>
        <dbReference type="EC" id="7.6.2.14"/>
    </reaction>
</comment>
<comment type="subunit">
    <text evidence="1">The complex is composed of two ATP-binding proteins (SsuB), two transmembrane proteins (SsuC) and a solute-binding protein (SsuA).</text>
</comment>
<comment type="subcellular location">
    <subcellularLocation>
        <location evidence="1">Cell membrane</location>
        <topology evidence="1">Peripheral membrane protein</topology>
    </subcellularLocation>
</comment>
<comment type="similarity">
    <text evidence="1">Belongs to the ABC transporter superfamily. Aliphatic sulfonates importer (TC 3.A.1.17.2) family.</text>
</comment>
<comment type="sequence caution" evidence="2">
    <conflict type="erroneous initiation">
        <sequence resource="EMBL-CDS" id="CAJ59260"/>
    </conflict>
</comment>
<proteinExistence type="inferred from homology"/>
<dbReference type="EC" id="7.6.2.14" evidence="1"/>
<dbReference type="EMBL" id="CT573213">
    <property type="protein sequence ID" value="CAJ59260.1"/>
    <property type="status" value="ALT_INIT"/>
    <property type="molecule type" value="Genomic_DNA"/>
</dbReference>
<dbReference type="RefSeq" id="WP_041938728.1">
    <property type="nucleotide sequence ID" value="NC_008278.1"/>
</dbReference>
<dbReference type="SMR" id="Q0RT43"/>
<dbReference type="STRING" id="326424.FRAAL0586"/>
<dbReference type="KEGG" id="fal:FRAAL0586"/>
<dbReference type="eggNOG" id="COG1116">
    <property type="taxonomic scope" value="Bacteria"/>
</dbReference>
<dbReference type="HOGENOM" id="CLU_000604_1_22_11"/>
<dbReference type="OrthoDB" id="4533303at2"/>
<dbReference type="Proteomes" id="UP000000657">
    <property type="component" value="Chromosome"/>
</dbReference>
<dbReference type="GO" id="GO:0005886">
    <property type="term" value="C:plasma membrane"/>
    <property type="evidence" value="ECO:0007669"/>
    <property type="project" value="UniProtKB-SubCell"/>
</dbReference>
<dbReference type="GO" id="GO:0005524">
    <property type="term" value="F:ATP binding"/>
    <property type="evidence" value="ECO:0007669"/>
    <property type="project" value="UniProtKB-KW"/>
</dbReference>
<dbReference type="GO" id="GO:0016887">
    <property type="term" value="F:ATP hydrolysis activity"/>
    <property type="evidence" value="ECO:0007669"/>
    <property type="project" value="InterPro"/>
</dbReference>
<dbReference type="Gene3D" id="3.40.50.300">
    <property type="entry name" value="P-loop containing nucleotide triphosphate hydrolases"/>
    <property type="match status" value="1"/>
</dbReference>
<dbReference type="InterPro" id="IPR003593">
    <property type="entry name" value="AAA+_ATPase"/>
</dbReference>
<dbReference type="InterPro" id="IPR003439">
    <property type="entry name" value="ABC_transporter-like_ATP-bd"/>
</dbReference>
<dbReference type="InterPro" id="IPR017871">
    <property type="entry name" value="ABC_transporter-like_CS"/>
</dbReference>
<dbReference type="InterPro" id="IPR050166">
    <property type="entry name" value="ABC_transporter_ATP-bind"/>
</dbReference>
<dbReference type="InterPro" id="IPR027417">
    <property type="entry name" value="P-loop_NTPase"/>
</dbReference>
<dbReference type="PANTHER" id="PTHR42788:SF17">
    <property type="entry name" value="ALIPHATIC SULFONATES IMPORT ATP-BINDING PROTEIN SSUB"/>
    <property type="match status" value="1"/>
</dbReference>
<dbReference type="PANTHER" id="PTHR42788">
    <property type="entry name" value="TAURINE IMPORT ATP-BINDING PROTEIN-RELATED"/>
    <property type="match status" value="1"/>
</dbReference>
<dbReference type="Pfam" id="PF00005">
    <property type="entry name" value="ABC_tran"/>
    <property type="match status" value="1"/>
</dbReference>
<dbReference type="SMART" id="SM00382">
    <property type="entry name" value="AAA"/>
    <property type="match status" value="1"/>
</dbReference>
<dbReference type="SUPFAM" id="SSF52540">
    <property type="entry name" value="P-loop containing nucleoside triphosphate hydrolases"/>
    <property type="match status" value="1"/>
</dbReference>
<dbReference type="PROSITE" id="PS00211">
    <property type="entry name" value="ABC_TRANSPORTER_1"/>
    <property type="match status" value="1"/>
</dbReference>
<dbReference type="PROSITE" id="PS50893">
    <property type="entry name" value="ABC_TRANSPORTER_2"/>
    <property type="match status" value="1"/>
</dbReference>
<dbReference type="PROSITE" id="PS51291">
    <property type="entry name" value="SSUB"/>
    <property type="match status" value="1"/>
</dbReference>
<feature type="chain" id="PRO_0000279916" description="Aliphatic sulfonates import ATP-binding protein SsuB 1">
    <location>
        <begin position="1"/>
        <end position="267"/>
    </location>
</feature>
<feature type="domain" description="ABC transporter" evidence="1">
    <location>
        <begin position="35"/>
        <end position="249"/>
    </location>
</feature>
<feature type="binding site" evidence="1">
    <location>
        <begin position="67"/>
        <end position="74"/>
    </location>
    <ligand>
        <name>ATP</name>
        <dbReference type="ChEBI" id="CHEBI:30616"/>
    </ligand>
</feature>
<keyword id="KW-0067">ATP-binding</keyword>
<keyword id="KW-1003">Cell membrane</keyword>
<keyword id="KW-0472">Membrane</keyword>
<keyword id="KW-0547">Nucleotide-binding</keyword>
<keyword id="KW-1185">Reference proteome</keyword>
<keyword id="KW-1278">Translocase</keyword>
<keyword id="KW-0813">Transport</keyword>
<accession>Q0RT43</accession>
<sequence>MAPRLRRNVSMLDPQHRAHAAAADPTPGAGGGVAVRVRGLRRVFGEQVVLDGLDLTITPGEFVALLGRSGSGKSTLIRILGGFDDGVEGEVLAARRRSVVFQEARLLPWKRVLPNVTLGLAGRDVAERGRVALAEVGLAGRERSWPATLSGGEAQRVALARALVREPDLLMLDEPFGALDALTRIRMHALLQHLCRRHQPAVLFVTHDVDEAILLADRVVVLTEGRFSLDVPVAVASPRRRADPAFDRLRATLLAELGVDDLAAATH</sequence>
<organism>
    <name type="scientific">Frankia alni (strain DSM 45986 / CECT 9034 / ACN14a)</name>
    <dbReference type="NCBI Taxonomy" id="326424"/>
    <lineage>
        <taxon>Bacteria</taxon>
        <taxon>Bacillati</taxon>
        <taxon>Actinomycetota</taxon>
        <taxon>Actinomycetes</taxon>
        <taxon>Frankiales</taxon>
        <taxon>Frankiaceae</taxon>
        <taxon>Frankia</taxon>
    </lineage>
</organism>
<gene>
    <name evidence="1" type="primary">ssuB1</name>
    <name type="ordered locus">FRAAL0586</name>
</gene>